<evidence type="ECO:0000255" key="1">
    <source>
        <dbReference type="HAMAP-Rule" id="MF_00537"/>
    </source>
</evidence>
<evidence type="ECO:0000305" key="2"/>
<protein>
    <recommendedName>
        <fullName evidence="1">Small ribosomal subunit protein uS14A</fullName>
    </recommendedName>
    <alternativeName>
        <fullName evidence="2">30S ribosomal protein S14</fullName>
    </alternativeName>
</protein>
<sequence>MAKTSKIIKEQKIEETVARYAELRRELKANKDYRALSQLPRNASPTRMHRRDSLDGRPHAYMRKFGMSRLNFRRLAHEGQIPGVRKASW</sequence>
<name>RS14_PEDPA</name>
<comment type="function">
    <text evidence="1">Binds 16S rRNA, required for the assembly of 30S particles and may also be responsible for determining the conformation of the 16S rRNA at the A site.</text>
</comment>
<comment type="subunit">
    <text evidence="1">Part of the 30S ribosomal subunit. Contacts proteins S3 and S10.</text>
</comment>
<comment type="similarity">
    <text evidence="1">Belongs to the universal ribosomal protein uS14 family.</text>
</comment>
<proteinExistence type="inferred from homology"/>
<feature type="chain" id="PRO_0000354389" description="Small ribosomal subunit protein uS14A">
    <location>
        <begin position="1"/>
        <end position="89"/>
    </location>
</feature>
<accession>Q03HJ9</accession>
<keyword id="KW-0687">Ribonucleoprotein</keyword>
<keyword id="KW-0689">Ribosomal protein</keyword>
<keyword id="KW-0694">RNA-binding</keyword>
<keyword id="KW-0699">rRNA-binding</keyword>
<gene>
    <name evidence="1" type="primary">rpsN</name>
    <name type="ordered locus">PEPE_0222</name>
</gene>
<organism>
    <name type="scientific">Pediococcus pentosaceus (strain ATCC 25745 / CCUG 21536 / LMG 10740 / 183-1w)</name>
    <dbReference type="NCBI Taxonomy" id="278197"/>
    <lineage>
        <taxon>Bacteria</taxon>
        <taxon>Bacillati</taxon>
        <taxon>Bacillota</taxon>
        <taxon>Bacilli</taxon>
        <taxon>Lactobacillales</taxon>
        <taxon>Lactobacillaceae</taxon>
        <taxon>Pediococcus</taxon>
    </lineage>
</organism>
<reference key="1">
    <citation type="journal article" date="2006" name="Proc. Natl. Acad. Sci. U.S.A.">
        <title>Comparative genomics of the lactic acid bacteria.</title>
        <authorList>
            <person name="Makarova K.S."/>
            <person name="Slesarev A."/>
            <person name="Wolf Y.I."/>
            <person name="Sorokin A."/>
            <person name="Mirkin B."/>
            <person name="Koonin E.V."/>
            <person name="Pavlov A."/>
            <person name="Pavlova N."/>
            <person name="Karamychev V."/>
            <person name="Polouchine N."/>
            <person name="Shakhova V."/>
            <person name="Grigoriev I."/>
            <person name="Lou Y."/>
            <person name="Rohksar D."/>
            <person name="Lucas S."/>
            <person name="Huang K."/>
            <person name="Goodstein D.M."/>
            <person name="Hawkins T."/>
            <person name="Plengvidhya V."/>
            <person name="Welker D."/>
            <person name="Hughes J."/>
            <person name="Goh Y."/>
            <person name="Benson A."/>
            <person name="Baldwin K."/>
            <person name="Lee J.-H."/>
            <person name="Diaz-Muniz I."/>
            <person name="Dosti B."/>
            <person name="Smeianov V."/>
            <person name="Wechter W."/>
            <person name="Barabote R."/>
            <person name="Lorca G."/>
            <person name="Altermann E."/>
            <person name="Barrangou R."/>
            <person name="Ganesan B."/>
            <person name="Xie Y."/>
            <person name="Rawsthorne H."/>
            <person name="Tamir D."/>
            <person name="Parker C."/>
            <person name="Breidt F."/>
            <person name="Broadbent J.R."/>
            <person name="Hutkins R."/>
            <person name="O'Sullivan D."/>
            <person name="Steele J."/>
            <person name="Unlu G."/>
            <person name="Saier M.H. Jr."/>
            <person name="Klaenhammer T."/>
            <person name="Richardson P."/>
            <person name="Kozyavkin S."/>
            <person name="Weimer B.C."/>
            <person name="Mills D.A."/>
        </authorList>
    </citation>
    <scope>NUCLEOTIDE SEQUENCE [LARGE SCALE GENOMIC DNA]</scope>
    <source>
        <strain>ATCC 25745 / CCUG 21536 / LMG 10740 / 183-1w</strain>
    </source>
</reference>
<dbReference type="EMBL" id="CP000422">
    <property type="protein sequence ID" value="ABJ67323.1"/>
    <property type="molecule type" value="Genomic_DNA"/>
</dbReference>
<dbReference type="RefSeq" id="WP_011672936.1">
    <property type="nucleotide sequence ID" value="NC_008525.1"/>
</dbReference>
<dbReference type="SMR" id="Q03HJ9"/>
<dbReference type="STRING" id="278197.PEPE_0222"/>
<dbReference type="GeneID" id="33062989"/>
<dbReference type="KEGG" id="ppe:PEPE_0222"/>
<dbReference type="eggNOG" id="COG0199">
    <property type="taxonomic scope" value="Bacteria"/>
</dbReference>
<dbReference type="HOGENOM" id="CLU_139869_0_0_9"/>
<dbReference type="OrthoDB" id="9810484at2"/>
<dbReference type="Proteomes" id="UP000000773">
    <property type="component" value="Chromosome"/>
</dbReference>
<dbReference type="GO" id="GO:0005737">
    <property type="term" value="C:cytoplasm"/>
    <property type="evidence" value="ECO:0007669"/>
    <property type="project" value="UniProtKB-ARBA"/>
</dbReference>
<dbReference type="GO" id="GO:0015935">
    <property type="term" value="C:small ribosomal subunit"/>
    <property type="evidence" value="ECO:0007669"/>
    <property type="project" value="TreeGrafter"/>
</dbReference>
<dbReference type="GO" id="GO:0019843">
    <property type="term" value="F:rRNA binding"/>
    <property type="evidence" value="ECO:0007669"/>
    <property type="project" value="UniProtKB-UniRule"/>
</dbReference>
<dbReference type="GO" id="GO:0003735">
    <property type="term" value="F:structural constituent of ribosome"/>
    <property type="evidence" value="ECO:0007669"/>
    <property type="project" value="InterPro"/>
</dbReference>
<dbReference type="GO" id="GO:0006412">
    <property type="term" value="P:translation"/>
    <property type="evidence" value="ECO:0007669"/>
    <property type="project" value="UniProtKB-UniRule"/>
</dbReference>
<dbReference type="Gene3D" id="4.10.830.10">
    <property type="entry name" value="30s Ribosomal Protein S14, Chain N"/>
    <property type="match status" value="1"/>
</dbReference>
<dbReference type="HAMAP" id="MF_00537">
    <property type="entry name" value="Ribosomal_uS14_1"/>
    <property type="match status" value="1"/>
</dbReference>
<dbReference type="InterPro" id="IPR001209">
    <property type="entry name" value="Ribosomal_uS14"/>
</dbReference>
<dbReference type="InterPro" id="IPR023036">
    <property type="entry name" value="Ribosomal_uS14_bac/plastid"/>
</dbReference>
<dbReference type="InterPro" id="IPR043140">
    <property type="entry name" value="Ribosomal_uS14_sf"/>
</dbReference>
<dbReference type="NCBIfam" id="NF006477">
    <property type="entry name" value="PRK08881.1"/>
    <property type="match status" value="1"/>
</dbReference>
<dbReference type="PANTHER" id="PTHR19836">
    <property type="entry name" value="30S RIBOSOMAL PROTEIN S14"/>
    <property type="match status" value="1"/>
</dbReference>
<dbReference type="PANTHER" id="PTHR19836:SF19">
    <property type="entry name" value="SMALL RIBOSOMAL SUBUNIT PROTEIN US14M"/>
    <property type="match status" value="1"/>
</dbReference>
<dbReference type="Pfam" id="PF00253">
    <property type="entry name" value="Ribosomal_S14"/>
    <property type="match status" value="1"/>
</dbReference>
<dbReference type="SUPFAM" id="SSF57716">
    <property type="entry name" value="Glucocorticoid receptor-like (DNA-binding domain)"/>
    <property type="match status" value="1"/>
</dbReference>